<keyword id="KW-0414">Isoprene biosynthesis</keyword>
<keyword id="KW-0460">Magnesium</keyword>
<keyword id="KW-0479">Metal-binding</keyword>
<keyword id="KW-1185">Reference proteome</keyword>
<keyword id="KW-0784">Thiamine biosynthesis</keyword>
<keyword id="KW-0786">Thiamine pyrophosphate</keyword>
<keyword id="KW-0808">Transferase</keyword>
<gene>
    <name evidence="1" type="primary">dxs</name>
    <name type="ordered locus">SSON_0397</name>
</gene>
<sequence>MSFDIAKYPTLALVDSTQELRLLPKESLPKLCDELRRYLLDSVSRSSGHFASGLGTVELTVALHYVYNTPFDQLIWDVGHQAYPHKILTGRRDKIGTIRQKGGLHPFPWRGESEYDVLSVGHSSTSISAGIGIAVTAEKEGKNRRTVCVIGDGAITAGMAFEAMNHAGDIRPDMLVVLNDNEMSISENVGALNNHLAQLLSGKLYSSLREGGKKVFSGVPPIKELLKRTEEHIKGMVVPGTLFEELGFNYIGPVDGHDVLGLITTLKNMRDLKGPQFLHIMTKKGRGYEPAEKDPITFHAVPKFDPSSGCLPKSSGGLPSYSKIFGDWLCETAAKDNKLMAITPAMREGSGMVEFSRKFPDRYFDVAIAEQHAVTFAAGLAIGGYKPIVAIYSTFLQRAYDQVLHDVAIQKLPVLFAIDRAGIVGADGQTHQGAFDLSYLRCIPEMVIMTPSDENECRQMLYTGYHYNDGPSAVRYPRGNAVGVELTPLEKLPIGKGIVKRRGEKLAILNFGTLMPDAAKVAESLNATLVDMRFVKPLDEALILEMAASHEALVTVEENAIMGGAGSGVNEVLMAHRKPVPVLNIGLPDFFIPQGTQEEMRAELGLDAAGMEAKIKAWLA</sequence>
<organism>
    <name type="scientific">Shigella sonnei (strain Ss046)</name>
    <dbReference type="NCBI Taxonomy" id="300269"/>
    <lineage>
        <taxon>Bacteria</taxon>
        <taxon>Pseudomonadati</taxon>
        <taxon>Pseudomonadota</taxon>
        <taxon>Gammaproteobacteria</taxon>
        <taxon>Enterobacterales</taxon>
        <taxon>Enterobacteriaceae</taxon>
        <taxon>Shigella</taxon>
    </lineage>
</organism>
<evidence type="ECO:0000255" key="1">
    <source>
        <dbReference type="HAMAP-Rule" id="MF_00315"/>
    </source>
</evidence>
<comment type="function">
    <text evidence="1">Catalyzes the acyloin condensation reaction between C atoms 2 and 3 of pyruvate and glyceraldehyde 3-phosphate to yield 1-deoxy-D-xylulose-5-phosphate (DXP).</text>
</comment>
<comment type="catalytic activity">
    <reaction evidence="1">
        <text>D-glyceraldehyde 3-phosphate + pyruvate + H(+) = 1-deoxy-D-xylulose 5-phosphate + CO2</text>
        <dbReference type="Rhea" id="RHEA:12605"/>
        <dbReference type="ChEBI" id="CHEBI:15361"/>
        <dbReference type="ChEBI" id="CHEBI:15378"/>
        <dbReference type="ChEBI" id="CHEBI:16526"/>
        <dbReference type="ChEBI" id="CHEBI:57792"/>
        <dbReference type="ChEBI" id="CHEBI:59776"/>
        <dbReference type="EC" id="2.2.1.7"/>
    </reaction>
</comment>
<comment type="cofactor">
    <cofactor evidence="1">
        <name>Mg(2+)</name>
        <dbReference type="ChEBI" id="CHEBI:18420"/>
    </cofactor>
    <text evidence="1">Binds 1 Mg(2+) ion per subunit.</text>
</comment>
<comment type="cofactor">
    <cofactor evidence="1">
        <name>thiamine diphosphate</name>
        <dbReference type="ChEBI" id="CHEBI:58937"/>
    </cofactor>
    <text evidence="1">Binds 1 thiamine pyrophosphate per subunit.</text>
</comment>
<comment type="pathway">
    <text evidence="1">Metabolic intermediate biosynthesis; 1-deoxy-D-xylulose 5-phosphate biosynthesis; 1-deoxy-D-xylulose 5-phosphate from D-glyceraldehyde 3-phosphate and pyruvate: step 1/1.</text>
</comment>
<comment type="subunit">
    <text evidence="1">Homodimer.</text>
</comment>
<comment type="similarity">
    <text evidence="1">Belongs to the transketolase family. DXPS subfamily.</text>
</comment>
<accession>Q3Z4Y9</accession>
<name>DXS_SHISS</name>
<proteinExistence type="inferred from homology"/>
<reference key="1">
    <citation type="journal article" date="2005" name="Nucleic Acids Res.">
        <title>Genome dynamics and diversity of Shigella species, the etiologic agents of bacillary dysentery.</title>
        <authorList>
            <person name="Yang F."/>
            <person name="Yang J."/>
            <person name="Zhang X."/>
            <person name="Chen L."/>
            <person name="Jiang Y."/>
            <person name="Yan Y."/>
            <person name="Tang X."/>
            <person name="Wang J."/>
            <person name="Xiong Z."/>
            <person name="Dong J."/>
            <person name="Xue Y."/>
            <person name="Zhu Y."/>
            <person name="Xu X."/>
            <person name="Sun L."/>
            <person name="Chen S."/>
            <person name="Nie H."/>
            <person name="Peng J."/>
            <person name="Xu J."/>
            <person name="Wang Y."/>
            <person name="Yuan Z."/>
            <person name="Wen Y."/>
            <person name="Yao Z."/>
            <person name="Shen Y."/>
            <person name="Qiang B."/>
            <person name="Hou Y."/>
            <person name="Yu J."/>
            <person name="Jin Q."/>
        </authorList>
    </citation>
    <scope>NUCLEOTIDE SEQUENCE [LARGE SCALE GENOMIC DNA]</scope>
    <source>
        <strain>Ss046</strain>
    </source>
</reference>
<dbReference type="EC" id="2.2.1.7" evidence="1"/>
<dbReference type="EMBL" id="CP000038">
    <property type="protein sequence ID" value="AAZ87173.1"/>
    <property type="molecule type" value="Genomic_DNA"/>
</dbReference>
<dbReference type="RefSeq" id="WP_000006837.1">
    <property type="nucleotide sequence ID" value="NC_007384.1"/>
</dbReference>
<dbReference type="SMR" id="Q3Z4Y9"/>
<dbReference type="GeneID" id="93777040"/>
<dbReference type="KEGG" id="ssn:SSON_0397"/>
<dbReference type="HOGENOM" id="CLU_009227_1_4_6"/>
<dbReference type="UniPathway" id="UPA00064">
    <property type="reaction ID" value="UER00091"/>
</dbReference>
<dbReference type="Proteomes" id="UP000002529">
    <property type="component" value="Chromosome"/>
</dbReference>
<dbReference type="GO" id="GO:0005829">
    <property type="term" value="C:cytosol"/>
    <property type="evidence" value="ECO:0007669"/>
    <property type="project" value="TreeGrafter"/>
</dbReference>
<dbReference type="GO" id="GO:0008661">
    <property type="term" value="F:1-deoxy-D-xylulose-5-phosphate synthase activity"/>
    <property type="evidence" value="ECO:0007669"/>
    <property type="project" value="UniProtKB-UniRule"/>
</dbReference>
<dbReference type="GO" id="GO:0000287">
    <property type="term" value="F:magnesium ion binding"/>
    <property type="evidence" value="ECO:0007669"/>
    <property type="project" value="UniProtKB-UniRule"/>
</dbReference>
<dbReference type="GO" id="GO:0030976">
    <property type="term" value="F:thiamine pyrophosphate binding"/>
    <property type="evidence" value="ECO:0007669"/>
    <property type="project" value="UniProtKB-UniRule"/>
</dbReference>
<dbReference type="GO" id="GO:0052865">
    <property type="term" value="P:1-deoxy-D-xylulose 5-phosphate biosynthetic process"/>
    <property type="evidence" value="ECO:0007669"/>
    <property type="project" value="UniProtKB-UniPathway"/>
</dbReference>
<dbReference type="GO" id="GO:0019288">
    <property type="term" value="P:isopentenyl diphosphate biosynthetic process, methylerythritol 4-phosphate pathway"/>
    <property type="evidence" value="ECO:0007669"/>
    <property type="project" value="TreeGrafter"/>
</dbReference>
<dbReference type="GO" id="GO:0016114">
    <property type="term" value="P:terpenoid biosynthetic process"/>
    <property type="evidence" value="ECO:0007669"/>
    <property type="project" value="UniProtKB-UniRule"/>
</dbReference>
<dbReference type="GO" id="GO:0009228">
    <property type="term" value="P:thiamine biosynthetic process"/>
    <property type="evidence" value="ECO:0007669"/>
    <property type="project" value="UniProtKB-UniRule"/>
</dbReference>
<dbReference type="CDD" id="cd02007">
    <property type="entry name" value="TPP_DXS"/>
    <property type="match status" value="1"/>
</dbReference>
<dbReference type="CDD" id="cd07033">
    <property type="entry name" value="TPP_PYR_DXS_TK_like"/>
    <property type="match status" value="1"/>
</dbReference>
<dbReference type="FunFam" id="3.40.50.920:FF:000002">
    <property type="entry name" value="1-deoxy-D-xylulose-5-phosphate synthase"/>
    <property type="match status" value="1"/>
</dbReference>
<dbReference type="FunFam" id="3.40.50.970:FF:000005">
    <property type="entry name" value="1-deoxy-D-xylulose-5-phosphate synthase"/>
    <property type="match status" value="1"/>
</dbReference>
<dbReference type="Gene3D" id="3.40.50.920">
    <property type="match status" value="1"/>
</dbReference>
<dbReference type="Gene3D" id="3.40.50.970">
    <property type="match status" value="2"/>
</dbReference>
<dbReference type="HAMAP" id="MF_00315">
    <property type="entry name" value="DXP_synth"/>
    <property type="match status" value="1"/>
</dbReference>
<dbReference type="InterPro" id="IPR005477">
    <property type="entry name" value="Dxylulose-5-P_synthase"/>
</dbReference>
<dbReference type="InterPro" id="IPR029061">
    <property type="entry name" value="THDP-binding"/>
</dbReference>
<dbReference type="InterPro" id="IPR009014">
    <property type="entry name" value="Transketo_C/PFOR_II"/>
</dbReference>
<dbReference type="InterPro" id="IPR005475">
    <property type="entry name" value="Transketolase-like_Pyr-bd"/>
</dbReference>
<dbReference type="InterPro" id="IPR020826">
    <property type="entry name" value="Transketolase_BS"/>
</dbReference>
<dbReference type="InterPro" id="IPR033248">
    <property type="entry name" value="Transketolase_C"/>
</dbReference>
<dbReference type="InterPro" id="IPR049557">
    <property type="entry name" value="Transketolase_CS"/>
</dbReference>
<dbReference type="NCBIfam" id="TIGR00204">
    <property type="entry name" value="dxs"/>
    <property type="match status" value="1"/>
</dbReference>
<dbReference type="NCBIfam" id="NF003933">
    <property type="entry name" value="PRK05444.2-2"/>
    <property type="match status" value="1"/>
</dbReference>
<dbReference type="PANTHER" id="PTHR43322">
    <property type="entry name" value="1-D-DEOXYXYLULOSE 5-PHOSPHATE SYNTHASE-RELATED"/>
    <property type="match status" value="1"/>
</dbReference>
<dbReference type="PANTHER" id="PTHR43322:SF5">
    <property type="entry name" value="1-DEOXY-D-XYLULOSE-5-PHOSPHATE SYNTHASE, CHLOROPLASTIC"/>
    <property type="match status" value="1"/>
</dbReference>
<dbReference type="Pfam" id="PF13292">
    <property type="entry name" value="DXP_synthase_N"/>
    <property type="match status" value="1"/>
</dbReference>
<dbReference type="Pfam" id="PF02779">
    <property type="entry name" value="Transket_pyr"/>
    <property type="match status" value="1"/>
</dbReference>
<dbReference type="Pfam" id="PF02780">
    <property type="entry name" value="Transketolase_C"/>
    <property type="match status" value="1"/>
</dbReference>
<dbReference type="SMART" id="SM00861">
    <property type="entry name" value="Transket_pyr"/>
    <property type="match status" value="1"/>
</dbReference>
<dbReference type="SUPFAM" id="SSF52518">
    <property type="entry name" value="Thiamin diphosphate-binding fold (THDP-binding)"/>
    <property type="match status" value="2"/>
</dbReference>
<dbReference type="SUPFAM" id="SSF52922">
    <property type="entry name" value="TK C-terminal domain-like"/>
    <property type="match status" value="1"/>
</dbReference>
<dbReference type="PROSITE" id="PS00801">
    <property type="entry name" value="TRANSKETOLASE_1"/>
    <property type="match status" value="1"/>
</dbReference>
<dbReference type="PROSITE" id="PS00802">
    <property type="entry name" value="TRANSKETOLASE_2"/>
    <property type="match status" value="1"/>
</dbReference>
<protein>
    <recommendedName>
        <fullName evidence="1">1-deoxy-D-xylulose-5-phosphate synthase</fullName>
        <ecNumber evidence="1">2.2.1.7</ecNumber>
    </recommendedName>
    <alternativeName>
        <fullName evidence="1">1-deoxyxylulose-5-phosphate synthase</fullName>
        <shortName evidence="1">DXP synthase</shortName>
        <shortName evidence="1">DXPS</shortName>
    </alternativeName>
</protein>
<feature type="chain" id="PRO_0000256485" description="1-deoxy-D-xylulose-5-phosphate synthase">
    <location>
        <begin position="1"/>
        <end position="620"/>
    </location>
</feature>
<feature type="binding site" evidence="1">
    <location>
        <position position="80"/>
    </location>
    <ligand>
        <name>thiamine diphosphate</name>
        <dbReference type="ChEBI" id="CHEBI:58937"/>
    </ligand>
</feature>
<feature type="binding site" evidence="1">
    <location>
        <begin position="121"/>
        <end position="123"/>
    </location>
    <ligand>
        <name>thiamine diphosphate</name>
        <dbReference type="ChEBI" id="CHEBI:58937"/>
    </ligand>
</feature>
<feature type="binding site" evidence="1">
    <location>
        <position position="152"/>
    </location>
    <ligand>
        <name>Mg(2+)</name>
        <dbReference type="ChEBI" id="CHEBI:18420"/>
    </ligand>
</feature>
<feature type="binding site" evidence="1">
    <location>
        <begin position="153"/>
        <end position="154"/>
    </location>
    <ligand>
        <name>thiamine diphosphate</name>
        <dbReference type="ChEBI" id="CHEBI:58937"/>
    </ligand>
</feature>
<feature type="binding site" evidence="1">
    <location>
        <position position="181"/>
    </location>
    <ligand>
        <name>Mg(2+)</name>
        <dbReference type="ChEBI" id="CHEBI:18420"/>
    </ligand>
</feature>
<feature type="binding site" evidence="1">
    <location>
        <position position="181"/>
    </location>
    <ligand>
        <name>thiamine diphosphate</name>
        <dbReference type="ChEBI" id="CHEBI:58937"/>
    </ligand>
</feature>
<feature type="binding site" evidence="1">
    <location>
        <position position="288"/>
    </location>
    <ligand>
        <name>thiamine diphosphate</name>
        <dbReference type="ChEBI" id="CHEBI:58937"/>
    </ligand>
</feature>
<feature type="binding site" evidence="1">
    <location>
        <position position="370"/>
    </location>
    <ligand>
        <name>thiamine diphosphate</name>
        <dbReference type="ChEBI" id="CHEBI:58937"/>
    </ligand>
</feature>